<organism>
    <name type="scientific">Arabidopsis thaliana</name>
    <name type="common">Mouse-ear cress</name>
    <dbReference type="NCBI Taxonomy" id="3702"/>
    <lineage>
        <taxon>Eukaryota</taxon>
        <taxon>Viridiplantae</taxon>
        <taxon>Streptophyta</taxon>
        <taxon>Embryophyta</taxon>
        <taxon>Tracheophyta</taxon>
        <taxon>Spermatophyta</taxon>
        <taxon>Magnoliopsida</taxon>
        <taxon>eudicotyledons</taxon>
        <taxon>Gunneridae</taxon>
        <taxon>Pentapetalae</taxon>
        <taxon>rosids</taxon>
        <taxon>malvids</taxon>
        <taxon>Brassicales</taxon>
        <taxon>Brassicaceae</taxon>
        <taxon>Camelineae</taxon>
        <taxon>Arabidopsis</taxon>
    </lineage>
</organism>
<sequence length="906" mass="103630">MQDLYMVDSIVSFGVEKLWKLLSQEYERFQGVEEQITELRDDLKMLMAFLSDADAKKQTRALARNCLEEIKEITYDAEDIIEIFLLKGSVNMRSLACFPGGRREIALQITSISKRISKVIQVMQNLGIKSDIMDGVDSHAQLERKRELRHTFSSESESNLVGLEKNVEKLVEELVGNDSSHGVSITGLGGLGKTTLARQIFDHDKVKSHFDGLAWVCVSQEFTRKDVWKTILGNLSPKYKDSDLPEDDIQKKLFQLLETKKALIVFDDLWKREDWYRIAPMFPERKAGWKVLLTSRNDAIHPHCVTFKPELLTHDECWKLLQRIAFSKQKTITGYIIDKEMVKMAKEMTKHCKRLPLAVKLLGGLLDAKHTLRQWKLISENIISHIVVGGTSSNENDSSSVNHVLSLSFEGLPGYLKHCLLYLASYPEDHEIEIERLSYVWAAEGITYPGNYEGATIRDVADLYIEELVKRNMVISERDALTSRFEKCQLHDLMREICLLKAKEENFLQIVTDPTSSSSVHSLASSRSRRLVVYNTSIFSGENDMKNSKLRSLLFIPVGYSRFSMGSNFIELPLLRVLDLDGAKFKGGKLPSSIGKLIHLKYLSLYQASVTYLPSSLRNLKSLLYLNLRINSGQLINVPNVFKEMLELRYLSLPWERSSLTKLELGNLLKLETLINFSTKDSSVTDLHRMTKLRTLQILISGEGLHMETLSSALSMLGHLEDLTVTPSENSVQFKHPKLIYRPMLPDVQHFPSHLTTISLVYCFLEEDPMPTLEKLLQLKVVSLWYNAYVGRRMVCTGGGFPPLHRLEIWGLDALEEWIVEEGSMPLLHTLHIVDCKKLKEIPDGLRFISSLKELAIRTNEKVFQKKVSKGGEDYYKMQHVPLIRYNWPQEPENNEVIYSFPSPII</sequence>
<accession>Q9XIF0</accession>
<comment type="function">
    <text>Potential disease resistance protein.</text>
</comment>
<comment type="domain">
    <text evidence="1">The LRR repeats probably act as specificity determinant of pathogen recognition.</text>
</comment>
<comment type="similarity">
    <text evidence="3">Belongs to the disease resistance NB-LRR family.</text>
</comment>
<comment type="online information" name="NIB-LRRS">
    <link uri="http://niblrrs.ucdavis.edu"/>
    <text>Functional and comparative genomics of disease resistance gene homologs</text>
</comment>
<name>DRL13_ARATH</name>
<proteinExistence type="inferred from homology"/>
<protein>
    <recommendedName>
        <fullName>Putative disease resistance protein At1g59780</fullName>
    </recommendedName>
</protein>
<evidence type="ECO:0000250" key="1"/>
<evidence type="ECO:0000255" key="2"/>
<evidence type="ECO:0000305" key="3"/>
<gene>
    <name type="ordered locus">At1g59780</name>
    <name type="ORF">F23H11.10</name>
</gene>
<feature type="chain" id="PRO_0000212745" description="Putative disease resistance protein At1g59780">
    <location>
        <begin position="1"/>
        <end position="906"/>
    </location>
</feature>
<feature type="domain" description="NB-ARC">
    <location>
        <begin position="138"/>
        <end position="452"/>
    </location>
</feature>
<feature type="repeat" description="LRR 1">
    <location>
        <begin position="572"/>
        <end position="597"/>
    </location>
</feature>
<feature type="repeat" description="LRR 2">
    <location>
        <begin position="599"/>
        <end position="619"/>
    </location>
</feature>
<feature type="repeat" description="LRR 3">
    <location>
        <begin position="620"/>
        <end position="644"/>
    </location>
</feature>
<feature type="repeat" description="LRR 4">
    <location>
        <begin position="825"/>
        <end position="850"/>
    </location>
</feature>
<feature type="coiled-coil region" evidence="2">
    <location>
        <begin position="20"/>
        <end position="59"/>
    </location>
</feature>
<feature type="binding site" evidence="2">
    <location>
        <begin position="187"/>
        <end position="194"/>
    </location>
    <ligand>
        <name>ATP</name>
        <dbReference type="ChEBI" id="CHEBI:30616"/>
    </ligand>
</feature>
<keyword id="KW-0067">ATP-binding</keyword>
<keyword id="KW-0175">Coiled coil</keyword>
<keyword id="KW-0433">Leucine-rich repeat</keyword>
<keyword id="KW-0547">Nucleotide-binding</keyword>
<keyword id="KW-0611">Plant defense</keyword>
<keyword id="KW-1185">Reference proteome</keyword>
<keyword id="KW-0677">Repeat</keyword>
<reference key="1">
    <citation type="journal article" date="2000" name="Nature">
        <title>Sequence and analysis of chromosome 1 of the plant Arabidopsis thaliana.</title>
        <authorList>
            <person name="Theologis A."/>
            <person name="Ecker J.R."/>
            <person name="Palm C.J."/>
            <person name="Federspiel N.A."/>
            <person name="Kaul S."/>
            <person name="White O."/>
            <person name="Alonso J."/>
            <person name="Altafi H."/>
            <person name="Araujo R."/>
            <person name="Bowman C.L."/>
            <person name="Brooks S.Y."/>
            <person name="Buehler E."/>
            <person name="Chan A."/>
            <person name="Chao Q."/>
            <person name="Chen H."/>
            <person name="Cheuk R.F."/>
            <person name="Chin C.W."/>
            <person name="Chung M.K."/>
            <person name="Conn L."/>
            <person name="Conway A.B."/>
            <person name="Conway A.R."/>
            <person name="Creasy T.H."/>
            <person name="Dewar K."/>
            <person name="Dunn P."/>
            <person name="Etgu P."/>
            <person name="Feldblyum T.V."/>
            <person name="Feng J.-D."/>
            <person name="Fong B."/>
            <person name="Fujii C.Y."/>
            <person name="Gill J.E."/>
            <person name="Goldsmith A.D."/>
            <person name="Haas B."/>
            <person name="Hansen N.F."/>
            <person name="Hughes B."/>
            <person name="Huizar L."/>
            <person name="Hunter J.L."/>
            <person name="Jenkins J."/>
            <person name="Johnson-Hopson C."/>
            <person name="Khan S."/>
            <person name="Khaykin E."/>
            <person name="Kim C.J."/>
            <person name="Koo H.L."/>
            <person name="Kremenetskaia I."/>
            <person name="Kurtz D.B."/>
            <person name="Kwan A."/>
            <person name="Lam B."/>
            <person name="Langin-Hooper S."/>
            <person name="Lee A."/>
            <person name="Lee J.M."/>
            <person name="Lenz C.A."/>
            <person name="Li J.H."/>
            <person name="Li Y.-P."/>
            <person name="Lin X."/>
            <person name="Liu S.X."/>
            <person name="Liu Z.A."/>
            <person name="Luros J.S."/>
            <person name="Maiti R."/>
            <person name="Marziali A."/>
            <person name="Militscher J."/>
            <person name="Miranda M."/>
            <person name="Nguyen M."/>
            <person name="Nierman W.C."/>
            <person name="Osborne B.I."/>
            <person name="Pai G."/>
            <person name="Peterson J."/>
            <person name="Pham P.K."/>
            <person name="Rizzo M."/>
            <person name="Rooney T."/>
            <person name="Rowley D."/>
            <person name="Sakano H."/>
            <person name="Salzberg S.L."/>
            <person name="Schwartz J.R."/>
            <person name="Shinn P."/>
            <person name="Southwick A.M."/>
            <person name="Sun H."/>
            <person name="Tallon L.J."/>
            <person name="Tambunga G."/>
            <person name="Toriumi M.J."/>
            <person name="Town C.D."/>
            <person name="Utterback T."/>
            <person name="Van Aken S."/>
            <person name="Vaysberg M."/>
            <person name="Vysotskaia V.S."/>
            <person name="Walker M."/>
            <person name="Wu D."/>
            <person name="Yu G."/>
            <person name="Fraser C.M."/>
            <person name="Venter J.C."/>
            <person name="Davis R.W."/>
        </authorList>
    </citation>
    <scope>NUCLEOTIDE SEQUENCE [LARGE SCALE GENOMIC DNA]</scope>
    <source>
        <strain>cv. Columbia</strain>
    </source>
</reference>
<reference key="2">
    <citation type="journal article" date="2017" name="Plant J.">
        <title>Araport11: a complete reannotation of the Arabidopsis thaliana reference genome.</title>
        <authorList>
            <person name="Cheng C.Y."/>
            <person name="Krishnakumar V."/>
            <person name="Chan A.P."/>
            <person name="Thibaud-Nissen F."/>
            <person name="Schobel S."/>
            <person name="Town C.D."/>
        </authorList>
    </citation>
    <scope>GENOME REANNOTATION</scope>
    <source>
        <strain>cv. Columbia</strain>
    </source>
</reference>
<dbReference type="EMBL" id="AC007258">
    <property type="protein sequence ID" value="AAD39321.1"/>
    <property type="molecule type" value="Genomic_DNA"/>
</dbReference>
<dbReference type="EMBL" id="CP002684">
    <property type="protein sequence ID" value="AEE33617.1"/>
    <property type="molecule type" value="Genomic_DNA"/>
</dbReference>
<dbReference type="PIR" id="G96621">
    <property type="entry name" value="G96621"/>
</dbReference>
<dbReference type="RefSeq" id="NP_176187.1">
    <property type="nucleotide sequence ID" value="NM_104671.1"/>
</dbReference>
<dbReference type="SMR" id="Q9XIF0"/>
<dbReference type="BioGRID" id="27496">
    <property type="interactions" value="3"/>
</dbReference>
<dbReference type="STRING" id="3702.Q9XIF0"/>
<dbReference type="GlyGen" id="Q9XIF0">
    <property type="glycosylation" value="1 site"/>
</dbReference>
<dbReference type="PaxDb" id="3702-AT1G59780.1"/>
<dbReference type="ProteomicsDB" id="224310"/>
<dbReference type="EnsemblPlants" id="AT1G59780.1">
    <property type="protein sequence ID" value="AT1G59780.1"/>
    <property type="gene ID" value="AT1G59780"/>
</dbReference>
<dbReference type="GeneID" id="842271"/>
<dbReference type="Gramene" id="AT1G59780.1">
    <property type="protein sequence ID" value="AT1G59780.1"/>
    <property type="gene ID" value="AT1G59780"/>
</dbReference>
<dbReference type="KEGG" id="ath:AT1G59780"/>
<dbReference type="Araport" id="AT1G59780"/>
<dbReference type="TAIR" id="AT1G59780"/>
<dbReference type="eggNOG" id="KOG4658">
    <property type="taxonomic scope" value="Eukaryota"/>
</dbReference>
<dbReference type="HOGENOM" id="CLU_000837_25_4_1"/>
<dbReference type="InParanoid" id="Q9XIF0"/>
<dbReference type="PhylomeDB" id="Q9XIF0"/>
<dbReference type="PRO" id="PR:Q9XIF0"/>
<dbReference type="Proteomes" id="UP000006548">
    <property type="component" value="Chromosome 1"/>
</dbReference>
<dbReference type="ExpressionAtlas" id="Q9XIF0">
    <property type="expression patterns" value="baseline and differential"/>
</dbReference>
<dbReference type="GO" id="GO:0043531">
    <property type="term" value="F:ADP binding"/>
    <property type="evidence" value="ECO:0007669"/>
    <property type="project" value="InterPro"/>
</dbReference>
<dbReference type="GO" id="GO:0005524">
    <property type="term" value="F:ATP binding"/>
    <property type="evidence" value="ECO:0007669"/>
    <property type="project" value="UniProtKB-KW"/>
</dbReference>
<dbReference type="GO" id="GO:0098542">
    <property type="term" value="P:defense response to other organism"/>
    <property type="evidence" value="ECO:0007669"/>
    <property type="project" value="UniProtKB-ARBA"/>
</dbReference>
<dbReference type="CDD" id="cd14798">
    <property type="entry name" value="RX-CC_like"/>
    <property type="match status" value="1"/>
</dbReference>
<dbReference type="FunFam" id="3.40.50.300:FF:001091">
    <property type="entry name" value="Probable disease resistance protein At1g61300"/>
    <property type="match status" value="1"/>
</dbReference>
<dbReference type="FunFam" id="1.10.10.10:FF:000322">
    <property type="entry name" value="Probable disease resistance protein At1g63360"/>
    <property type="match status" value="1"/>
</dbReference>
<dbReference type="Gene3D" id="1.20.5.4130">
    <property type="match status" value="1"/>
</dbReference>
<dbReference type="Gene3D" id="1.10.8.430">
    <property type="entry name" value="Helical domain of apoptotic protease-activating factors"/>
    <property type="match status" value="1"/>
</dbReference>
<dbReference type="Gene3D" id="3.40.50.300">
    <property type="entry name" value="P-loop containing nucleotide triphosphate hydrolases"/>
    <property type="match status" value="1"/>
</dbReference>
<dbReference type="Gene3D" id="3.80.10.10">
    <property type="entry name" value="Ribonuclease Inhibitor"/>
    <property type="match status" value="1"/>
</dbReference>
<dbReference type="Gene3D" id="1.10.10.10">
    <property type="entry name" value="Winged helix-like DNA-binding domain superfamily/Winged helix DNA-binding domain"/>
    <property type="match status" value="1"/>
</dbReference>
<dbReference type="InterPro" id="IPR042197">
    <property type="entry name" value="Apaf_helical"/>
</dbReference>
<dbReference type="InterPro" id="IPR032675">
    <property type="entry name" value="LRR_dom_sf"/>
</dbReference>
<dbReference type="InterPro" id="IPR055414">
    <property type="entry name" value="LRR_R13L4/SHOC2-like"/>
</dbReference>
<dbReference type="InterPro" id="IPR002182">
    <property type="entry name" value="NB-ARC"/>
</dbReference>
<dbReference type="InterPro" id="IPR027417">
    <property type="entry name" value="P-loop_NTPase"/>
</dbReference>
<dbReference type="InterPro" id="IPR038005">
    <property type="entry name" value="RX-like_CC"/>
</dbReference>
<dbReference type="InterPro" id="IPR041118">
    <property type="entry name" value="Rx_N"/>
</dbReference>
<dbReference type="InterPro" id="IPR036388">
    <property type="entry name" value="WH-like_DNA-bd_sf"/>
</dbReference>
<dbReference type="PANTHER" id="PTHR36766:SF40">
    <property type="entry name" value="DISEASE RESISTANCE PROTEIN RGA3"/>
    <property type="match status" value="1"/>
</dbReference>
<dbReference type="PANTHER" id="PTHR36766">
    <property type="entry name" value="PLANT BROAD-SPECTRUM MILDEW RESISTANCE PROTEIN RPW8"/>
    <property type="match status" value="1"/>
</dbReference>
<dbReference type="Pfam" id="PF23598">
    <property type="entry name" value="LRR_14"/>
    <property type="match status" value="1"/>
</dbReference>
<dbReference type="Pfam" id="PF00931">
    <property type="entry name" value="NB-ARC"/>
    <property type="match status" value="1"/>
</dbReference>
<dbReference type="Pfam" id="PF18052">
    <property type="entry name" value="Rx_N"/>
    <property type="match status" value="1"/>
</dbReference>
<dbReference type="Pfam" id="PF23559">
    <property type="entry name" value="WH_DRP"/>
    <property type="match status" value="1"/>
</dbReference>
<dbReference type="PRINTS" id="PR00364">
    <property type="entry name" value="DISEASERSIST"/>
</dbReference>
<dbReference type="SUPFAM" id="SSF52058">
    <property type="entry name" value="L domain-like"/>
    <property type="match status" value="1"/>
</dbReference>
<dbReference type="SUPFAM" id="SSF52540">
    <property type="entry name" value="P-loop containing nucleoside triphosphate hydrolases"/>
    <property type="match status" value="1"/>
</dbReference>